<proteinExistence type="inferred from homology"/>
<sequence length="219" mass="24198">MAFLLHQARFFTTVNHLRDLPPTVQPEVAFAGRSNAGKSTAINVLCNQKRLAFASKTPGRTQHINYFSVGPAAEPVAHLVDLPGYGYAEVPGAAKAHWEQLLSSYLQTRPQLCGMILMMDARRPLTELDRRMIEWFAPTGKPIHSLLTKCDKLTRQESINALRATQKSLDAYRDAGYAGKLTVQLFSALKRTGLDDAHALIESWVRPAAADEDRAAVAE</sequence>
<name>ENGB_BURP1</name>
<organism>
    <name type="scientific">Burkholderia pseudomallei (strain 1710b)</name>
    <dbReference type="NCBI Taxonomy" id="320372"/>
    <lineage>
        <taxon>Bacteria</taxon>
        <taxon>Pseudomonadati</taxon>
        <taxon>Pseudomonadota</taxon>
        <taxon>Betaproteobacteria</taxon>
        <taxon>Burkholderiales</taxon>
        <taxon>Burkholderiaceae</taxon>
        <taxon>Burkholderia</taxon>
        <taxon>pseudomallei group</taxon>
    </lineage>
</organism>
<keyword id="KW-0131">Cell cycle</keyword>
<keyword id="KW-0132">Cell division</keyword>
<keyword id="KW-0342">GTP-binding</keyword>
<keyword id="KW-0460">Magnesium</keyword>
<keyword id="KW-0479">Metal-binding</keyword>
<keyword id="KW-0547">Nucleotide-binding</keyword>
<keyword id="KW-0717">Septation</keyword>
<dbReference type="EMBL" id="CP000124">
    <property type="protein sequence ID" value="ABA48283.1"/>
    <property type="status" value="ALT_INIT"/>
    <property type="molecule type" value="Genomic_DNA"/>
</dbReference>
<dbReference type="SMR" id="Q3JMU4"/>
<dbReference type="EnsemblBacteria" id="ABA48283">
    <property type="protein sequence ID" value="ABA48283"/>
    <property type="gene ID" value="BURPS1710b_3744"/>
</dbReference>
<dbReference type="KEGG" id="bpm:BURPS1710b_3744"/>
<dbReference type="HOGENOM" id="CLU_538270_0_0_4"/>
<dbReference type="Proteomes" id="UP000002700">
    <property type="component" value="Chromosome I"/>
</dbReference>
<dbReference type="GO" id="GO:0005829">
    <property type="term" value="C:cytosol"/>
    <property type="evidence" value="ECO:0007669"/>
    <property type="project" value="TreeGrafter"/>
</dbReference>
<dbReference type="GO" id="GO:0005525">
    <property type="term" value="F:GTP binding"/>
    <property type="evidence" value="ECO:0007669"/>
    <property type="project" value="UniProtKB-UniRule"/>
</dbReference>
<dbReference type="GO" id="GO:0046872">
    <property type="term" value="F:metal ion binding"/>
    <property type="evidence" value="ECO:0007669"/>
    <property type="project" value="UniProtKB-KW"/>
</dbReference>
<dbReference type="GO" id="GO:0000917">
    <property type="term" value="P:division septum assembly"/>
    <property type="evidence" value="ECO:0007669"/>
    <property type="project" value="UniProtKB-KW"/>
</dbReference>
<dbReference type="CDD" id="cd01876">
    <property type="entry name" value="YihA_EngB"/>
    <property type="match status" value="1"/>
</dbReference>
<dbReference type="FunFam" id="3.40.50.300:FF:000098">
    <property type="entry name" value="Probable GTP-binding protein EngB"/>
    <property type="match status" value="1"/>
</dbReference>
<dbReference type="Gene3D" id="3.40.50.300">
    <property type="entry name" value="P-loop containing nucleotide triphosphate hydrolases"/>
    <property type="match status" value="1"/>
</dbReference>
<dbReference type="HAMAP" id="MF_00321">
    <property type="entry name" value="GTPase_EngB"/>
    <property type="match status" value="1"/>
</dbReference>
<dbReference type="InterPro" id="IPR030393">
    <property type="entry name" value="G_ENGB_dom"/>
</dbReference>
<dbReference type="InterPro" id="IPR006073">
    <property type="entry name" value="GTP-bd"/>
</dbReference>
<dbReference type="InterPro" id="IPR019987">
    <property type="entry name" value="GTP-bd_ribosome_bio_YsxC"/>
</dbReference>
<dbReference type="InterPro" id="IPR027417">
    <property type="entry name" value="P-loop_NTPase"/>
</dbReference>
<dbReference type="NCBIfam" id="TIGR03598">
    <property type="entry name" value="GTPase_YsxC"/>
    <property type="match status" value="1"/>
</dbReference>
<dbReference type="PANTHER" id="PTHR11649:SF13">
    <property type="entry name" value="ENGB-TYPE G DOMAIN-CONTAINING PROTEIN"/>
    <property type="match status" value="1"/>
</dbReference>
<dbReference type="PANTHER" id="PTHR11649">
    <property type="entry name" value="MSS1/TRME-RELATED GTP-BINDING PROTEIN"/>
    <property type="match status" value="1"/>
</dbReference>
<dbReference type="Pfam" id="PF01926">
    <property type="entry name" value="MMR_HSR1"/>
    <property type="match status" value="1"/>
</dbReference>
<dbReference type="SUPFAM" id="SSF52540">
    <property type="entry name" value="P-loop containing nucleoside triphosphate hydrolases"/>
    <property type="match status" value="1"/>
</dbReference>
<dbReference type="PROSITE" id="PS51706">
    <property type="entry name" value="G_ENGB"/>
    <property type="match status" value="1"/>
</dbReference>
<accession>Q3JMU4</accession>
<evidence type="ECO:0000255" key="1">
    <source>
        <dbReference type="HAMAP-Rule" id="MF_00321"/>
    </source>
</evidence>
<evidence type="ECO:0000305" key="2"/>
<feature type="chain" id="PRO_0000266835" description="Probable GTP-binding protein EngB">
    <location>
        <begin position="1"/>
        <end position="219"/>
    </location>
</feature>
<feature type="domain" description="EngB-type G" evidence="1">
    <location>
        <begin position="24"/>
        <end position="207"/>
    </location>
</feature>
<feature type="binding site" evidence="1">
    <location>
        <begin position="32"/>
        <end position="39"/>
    </location>
    <ligand>
        <name>GTP</name>
        <dbReference type="ChEBI" id="CHEBI:37565"/>
    </ligand>
</feature>
<feature type="binding site" evidence="1">
    <location>
        <position position="39"/>
    </location>
    <ligand>
        <name>Mg(2+)</name>
        <dbReference type="ChEBI" id="CHEBI:18420"/>
    </ligand>
</feature>
<feature type="binding site" evidence="1">
    <location>
        <begin position="59"/>
        <end position="63"/>
    </location>
    <ligand>
        <name>GTP</name>
        <dbReference type="ChEBI" id="CHEBI:37565"/>
    </ligand>
</feature>
<feature type="binding site" evidence="1">
    <location>
        <position position="61"/>
    </location>
    <ligand>
        <name>Mg(2+)</name>
        <dbReference type="ChEBI" id="CHEBI:18420"/>
    </ligand>
</feature>
<feature type="binding site" evidence="1">
    <location>
        <begin position="81"/>
        <end position="84"/>
    </location>
    <ligand>
        <name>GTP</name>
        <dbReference type="ChEBI" id="CHEBI:37565"/>
    </ligand>
</feature>
<feature type="binding site" evidence="1">
    <location>
        <begin position="148"/>
        <end position="151"/>
    </location>
    <ligand>
        <name>GTP</name>
        <dbReference type="ChEBI" id="CHEBI:37565"/>
    </ligand>
</feature>
<feature type="binding site" evidence="1">
    <location>
        <begin position="185"/>
        <end position="188"/>
    </location>
    <ligand>
        <name>GTP</name>
        <dbReference type="ChEBI" id="CHEBI:37565"/>
    </ligand>
</feature>
<reference key="1">
    <citation type="journal article" date="2010" name="Genome Biol. Evol.">
        <title>Continuing evolution of Burkholderia mallei through genome reduction and large-scale rearrangements.</title>
        <authorList>
            <person name="Losada L."/>
            <person name="Ronning C.M."/>
            <person name="DeShazer D."/>
            <person name="Woods D."/>
            <person name="Fedorova N."/>
            <person name="Kim H.S."/>
            <person name="Shabalina S.A."/>
            <person name="Pearson T.R."/>
            <person name="Brinkac L."/>
            <person name="Tan P."/>
            <person name="Nandi T."/>
            <person name="Crabtree J."/>
            <person name="Badger J."/>
            <person name="Beckstrom-Sternberg S."/>
            <person name="Saqib M."/>
            <person name="Schutzer S.E."/>
            <person name="Keim P."/>
            <person name="Nierman W.C."/>
        </authorList>
    </citation>
    <scope>NUCLEOTIDE SEQUENCE [LARGE SCALE GENOMIC DNA]</scope>
    <source>
        <strain>1710b</strain>
    </source>
</reference>
<protein>
    <recommendedName>
        <fullName evidence="1">Probable GTP-binding protein EngB</fullName>
    </recommendedName>
</protein>
<gene>
    <name evidence="1" type="primary">engB</name>
    <name type="ordered locus">BURPS1710b_3744</name>
</gene>
<comment type="function">
    <text evidence="1">Necessary for normal cell division and for the maintenance of normal septation.</text>
</comment>
<comment type="cofactor">
    <cofactor evidence="1">
        <name>Mg(2+)</name>
        <dbReference type="ChEBI" id="CHEBI:18420"/>
    </cofactor>
</comment>
<comment type="similarity">
    <text evidence="1">Belongs to the TRAFAC class TrmE-Era-EngA-EngB-Septin-like GTPase superfamily. EngB GTPase family.</text>
</comment>
<comment type="sequence caution" evidence="2">
    <conflict type="erroneous initiation">
        <sequence resource="EMBL-CDS" id="ABA48283"/>
    </conflict>
</comment>